<name>CHLN_SYNR3</name>
<reference key="1">
    <citation type="submission" date="2006-05" db="EMBL/GenBank/DDBJ databases">
        <authorList>
            <consortium name="Genoscope"/>
        </authorList>
    </citation>
    <scope>NUCLEOTIDE SEQUENCE [LARGE SCALE GENOMIC DNA]</scope>
    <source>
        <strain>RCC307</strain>
    </source>
</reference>
<keyword id="KW-0004">4Fe-4S</keyword>
<keyword id="KW-0067">ATP-binding</keyword>
<keyword id="KW-0149">Chlorophyll biosynthesis</keyword>
<keyword id="KW-0408">Iron</keyword>
<keyword id="KW-0411">Iron-sulfur</keyword>
<keyword id="KW-0479">Metal-binding</keyword>
<keyword id="KW-0547">Nucleotide-binding</keyword>
<keyword id="KW-0560">Oxidoreductase</keyword>
<keyword id="KW-0602">Photosynthesis</keyword>
<keyword id="KW-1185">Reference proteome</keyword>
<protein>
    <recommendedName>
        <fullName evidence="1">Light-independent protochlorophyllide reductase subunit N</fullName>
        <shortName evidence="1">DPOR subunit N</shortName>
        <shortName evidence="1">LI-POR subunit N</shortName>
        <ecNumber evidence="1">1.3.7.7</ecNumber>
    </recommendedName>
</protein>
<feature type="chain" id="PRO_0000324031" description="Light-independent protochlorophyllide reductase subunit N">
    <location>
        <begin position="1"/>
        <end position="412"/>
    </location>
</feature>
<feature type="binding site" evidence="1">
    <location>
        <position position="16"/>
    </location>
    <ligand>
        <name>[4Fe-4S] cluster</name>
        <dbReference type="ChEBI" id="CHEBI:49883"/>
        <note>ligand shared with heterodimeric partner</note>
    </ligand>
</feature>
<feature type="binding site" evidence="1">
    <location>
        <position position="41"/>
    </location>
    <ligand>
        <name>[4Fe-4S] cluster</name>
        <dbReference type="ChEBI" id="CHEBI:49883"/>
        <note>ligand shared with heterodimeric partner</note>
    </ligand>
</feature>
<feature type="binding site" evidence="1">
    <location>
        <position position="102"/>
    </location>
    <ligand>
        <name>[4Fe-4S] cluster</name>
        <dbReference type="ChEBI" id="CHEBI:49883"/>
        <note>ligand shared with heterodimeric partner</note>
    </ligand>
</feature>
<dbReference type="EC" id="1.3.7.7" evidence="1"/>
<dbReference type="EMBL" id="CT978603">
    <property type="protein sequence ID" value="CAK28467.1"/>
    <property type="molecule type" value="Genomic_DNA"/>
</dbReference>
<dbReference type="SMR" id="A5GUA8"/>
<dbReference type="STRING" id="316278.SynRCC307_1564"/>
<dbReference type="KEGG" id="syr:SynRCC307_1564"/>
<dbReference type="eggNOG" id="COG2710">
    <property type="taxonomic scope" value="Bacteria"/>
</dbReference>
<dbReference type="HOGENOM" id="CLU_037170_0_0_3"/>
<dbReference type="OrthoDB" id="5714774at2"/>
<dbReference type="UniPathway" id="UPA00670"/>
<dbReference type="Proteomes" id="UP000001115">
    <property type="component" value="Chromosome"/>
</dbReference>
<dbReference type="GO" id="GO:0051539">
    <property type="term" value="F:4 iron, 4 sulfur cluster binding"/>
    <property type="evidence" value="ECO:0007669"/>
    <property type="project" value="UniProtKB-UniRule"/>
</dbReference>
<dbReference type="GO" id="GO:0005524">
    <property type="term" value="F:ATP binding"/>
    <property type="evidence" value="ECO:0007669"/>
    <property type="project" value="UniProtKB-UniRule"/>
</dbReference>
<dbReference type="GO" id="GO:0046872">
    <property type="term" value="F:metal ion binding"/>
    <property type="evidence" value="ECO:0007669"/>
    <property type="project" value="UniProtKB-KW"/>
</dbReference>
<dbReference type="GO" id="GO:0016730">
    <property type="term" value="F:oxidoreductase activity, acting on iron-sulfur proteins as donors"/>
    <property type="evidence" value="ECO:0007669"/>
    <property type="project" value="InterPro"/>
</dbReference>
<dbReference type="GO" id="GO:0016636">
    <property type="term" value="F:oxidoreductase activity, acting on the CH-CH group of donors, iron-sulfur protein as acceptor"/>
    <property type="evidence" value="ECO:0007669"/>
    <property type="project" value="UniProtKB-UniRule"/>
</dbReference>
<dbReference type="GO" id="GO:0036068">
    <property type="term" value="P:light-independent chlorophyll biosynthetic process"/>
    <property type="evidence" value="ECO:0007669"/>
    <property type="project" value="UniProtKB-UniRule"/>
</dbReference>
<dbReference type="GO" id="GO:0019685">
    <property type="term" value="P:photosynthesis, dark reaction"/>
    <property type="evidence" value="ECO:0007669"/>
    <property type="project" value="InterPro"/>
</dbReference>
<dbReference type="Gene3D" id="3.40.50.1980">
    <property type="entry name" value="Nitrogenase molybdenum iron protein domain"/>
    <property type="match status" value="3"/>
</dbReference>
<dbReference type="HAMAP" id="MF_00352">
    <property type="entry name" value="ChlN_BchN"/>
    <property type="match status" value="1"/>
</dbReference>
<dbReference type="InterPro" id="IPR050293">
    <property type="entry name" value="LIPOR_BchN/ChlN"/>
</dbReference>
<dbReference type="InterPro" id="IPR000510">
    <property type="entry name" value="Nase/OxRdtase_comp1"/>
</dbReference>
<dbReference type="InterPro" id="IPR005970">
    <property type="entry name" value="Protochl_reductN"/>
</dbReference>
<dbReference type="NCBIfam" id="TIGR01279">
    <property type="entry name" value="DPOR_bchN"/>
    <property type="match status" value="1"/>
</dbReference>
<dbReference type="NCBIfam" id="NF002768">
    <property type="entry name" value="PRK02842.1"/>
    <property type="match status" value="1"/>
</dbReference>
<dbReference type="PANTHER" id="PTHR39429">
    <property type="entry name" value="LIGHT-INDEPENDENT PROTOCHLOROPHYLLIDE REDUCTASE SUBUNIT N"/>
    <property type="match status" value="1"/>
</dbReference>
<dbReference type="PANTHER" id="PTHR39429:SF3">
    <property type="entry name" value="LIGHT-INDEPENDENT PROTOCHLOROPHYLLIDE REDUCTASE SUBUNIT N"/>
    <property type="match status" value="1"/>
</dbReference>
<dbReference type="Pfam" id="PF00148">
    <property type="entry name" value="Oxidored_nitro"/>
    <property type="match status" value="1"/>
</dbReference>
<dbReference type="PIRSF" id="PIRSF000162">
    <property type="entry name" value="P_chlorophyll_rd"/>
    <property type="match status" value="1"/>
</dbReference>
<dbReference type="SUPFAM" id="SSF53807">
    <property type="entry name" value="Helical backbone' metal receptor"/>
    <property type="match status" value="1"/>
</dbReference>
<comment type="function">
    <text evidence="1">Component of the dark-operative protochlorophyllide reductase (DPOR) that uses Mg-ATP and reduced ferredoxin to reduce ring D of protochlorophyllide (Pchlide) to form chlorophyllide a (Chlide). This reaction is light-independent. The NB-protein (ChlN-ChlB) is the catalytic component of the complex.</text>
</comment>
<comment type="catalytic activity">
    <reaction evidence="1">
        <text>chlorophyllide a + oxidized 2[4Fe-4S]-[ferredoxin] + 2 ADP + 2 phosphate = protochlorophyllide a + reduced 2[4Fe-4S]-[ferredoxin] + 2 ATP + 2 H2O</text>
        <dbReference type="Rhea" id="RHEA:28202"/>
        <dbReference type="Rhea" id="RHEA-COMP:10002"/>
        <dbReference type="Rhea" id="RHEA-COMP:10004"/>
        <dbReference type="ChEBI" id="CHEBI:15377"/>
        <dbReference type="ChEBI" id="CHEBI:30616"/>
        <dbReference type="ChEBI" id="CHEBI:33722"/>
        <dbReference type="ChEBI" id="CHEBI:33723"/>
        <dbReference type="ChEBI" id="CHEBI:43474"/>
        <dbReference type="ChEBI" id="CHEBI:83348"/>
        <dbReference type="ChEBI" id="CHEBI:83350"/>
        <dbReference type="ChEBI" id="CHEBI:456216"/>
        <dbReference type="EC" id="1.3.7.7"/>
    </reaction>
</comment>
<comment type="cofactor">
    <cofactor evidence="1">
        <name>[4Fe-4S] cluster</name>
        <dbReference type="ChEBI" id="CHEBI:49883"/>
    </cofactor>
    <text evidence="1">Binds 1 [4Fe-4S] cluster per heterodimer. The cluster is bound at the heterodimer interface by residues from both subunits.</text>
</comment>
<comment type="pathway">
    <text evidence="1">Porphyrin-containing compound metabolism; chlorophyll biosynthesis (light-independent).</text>
</comment>
<comment type="subunit">
    <text evidence="1">Protochlorophyllide reductase is composed of three subunits; ChlL, ChlN and ChlB. Forms a heterotetramer of two ChlB and two ChlN subunits.</text>
</comment>
<comment type="similarity">
    <text evidence="1">Belongs to the BchN/ChlN family.</text>
</comment>
<organism>
    <name type="scientific">Synechococcus sp. (strain RCC307)</name>
    <dbReference type="NCBI Taxonomy" id="316278"/>
    <lineage>
        <taxon>Bacteria</taxon>
        <taxon>Bacillati</taxon>
        <taxon>Cyanobacteriota</taxon>
        <taxon>Cyanophyceae</taxon>
        <taxon>Synechococcales</taxon>
        <taxon>Synechococcaceae</taxon>
        <taxon>Synechococcus</taxon>
    </lineage>
</organism>
<sequence length="412" mass="45138">MQLQLLKESGQREVFCGLTSIVWLHRRMPDAFFLVVGSRTCAHLIQSAAGVMIFAEPRFGTAILGERDLAGLADANEELDRVVADLLQRRPEIRTLFLVGSCPSEVIKLDLSKAAERLNQQHRGRVQVVNYSGSGIETTFTQGEDQALTALVPLMPQSTTPQLLLVGTLADGVEERFLTLFERLGIGPVASLPPRRSTELPAVGPGTKLLLTQPFLGQTARALQAKGAELISSPYPLGVEGSELWFRAAARAFGISDEHTTSVLEPLVTRGRAALEPHRKALEGKRLFLLPDSQMELALGRFLQRECGMELVEVGTPYLDRALQQEELDLLPADVQLSEGQNVEEQLQRVRQSHPDLVVCGMGLANPLEAEGITTKWSIELVFSPIHGCDQAGDLAELFARPLRRRGALTFA</sequence>
<proteinExistence type="inferred from homology"/>
<evidence type="ECO:0000255" key="1">
    <source>
        <dbReference type="HAMAP-Rule" id="MF_00352"/>
    </source>
</evidence>
<accession>A5GUA8</accession>
<gene>
    <name evidence="1" type="primary">chlN</name>
    <name type="ordered locus">SynRCC307_1564</name>
</gene>